<keyword id="KW-0002">3D-structure</keyword>
<keyword id="KW-0903">Direct protein sequencing</keyword>
<keyword id="KW-0238">DNA-binding</keyword>
<keyword id="KW-0489">Methyltransferase</keyword>
<keyword id="KW-0496">Mitochondrion</keyword>
<keyword id="KW-1185">Reference proteome</keyword>
<keyword id="KW-0694">RNA-binding</keyword>
<keyword id="KW-0949">S-adenosyl-L-methionine</keyword>
<keyword id="KW-0804">Transcription</keyword>
<keyword id="KW-0805">Transcription regulation</keyword>
<keyword id="KW-0808">Transferase</keyword>
<feature type="initiator methionine" description="Removed" evidence="4">
    <location>
        <position position="1"/>
    </location>
</feature>
<feature type="chain" id="PRO_0000096621" description="Mitochondrial transcription factor 1">
    <location>
        <begin position="2"/>
        <end position="341"/>
    </location>
</feature>
<feature type="binding site" evidence="1">
    <location>
        <position position="23"/>
    </location>
    <ligand>
        <name>S-adenosyl-L-methionine</name>
        <dbReference type="ChEBI" id="CHEBI:59789"/>
    </ligand>
</feature>
<feature type="binding site" evidence="1">
    <location>
        <position position="77"/>
    </location>
    <ligand>
        <name>S-adenosyl-L-methionine</name>
        <dbReference type="ChEBI" id="CHEBI:59789"/>
    </ligand>
</feature>
<feature type="binding site" evidence="1">
    <location>
        <position position="101"/>
    </location>
    <ligand>
        <name>S-adenosyl-L-methionine</name>
        <dbReference type="ChEBI" id="CHEBI:59789"/>
    </ligand>
</feature>
<feature type="binding site" evidence="1">
    <location>
        <position position="137"/>
    </location>
    <ligand>
        <name>S-adenosyl-L-methionine</name>
        <dbReference type="ChEBI" id="CHEBI:59789"/>
    </ligand>
</feature>
<feature type="sequence conflict" description="In Ref. 1; CAA31864." evidence="6" ref="1">
    <original>R</original>
    <variation>S</variation>
    <location>
        <position position="79"/>
    </location>
</feature>
<feature type="sequence conflict" description="In Ref. 1; CAA31864." evidence="6" ref="1">
    <original>QY</original>
    <variation>PI</variation>
    <location>
        <begin position="287"/>
        <end position="288"/>
    </location>
</feature>
<feature type="helix" evidence="8">
    <location>
        <begin position="8"/>
        <end position="11"/>
    </location>
</feature>
<feature type="helix" evidence="7">
    <location>
        <begin position="17"/>
        <end position="19"/>
    </location>
</feature>
<feature type="helix" evidence="7">
    <location>
        <begin position="26"/>
        <end position="36"/>
    </location>
</feature>
<feature type="helix" evidence="7">
    <location>
        <begin position="38"/>
        <end position="40"/>
    </location>
</feature>
<feature type="turn" evidence="7">
    <location>
        <begin position="45"/>
        <end position="47"/>
    </location>
</feature>
<feature type="strand" evidence="7">
    <location>
        <begin position="49"/>
        <end position="54"/>
    </location>
</feature>
<feature type="helix" evidence="7">
    <location>
        <begin position="59"/>
        <end position="68"/>
    </location>
</feature>
<feature type="strand" evidence="7">
    <location>
        <begin position="71"/>
        <end position="76"/>
    </location>
</feature>
<feature type="helix" evidence="7">
    <location>
        <begin position="80"/>
        <end position="89"/>
    </location>
</feature>
<feature type="turn" evidence="7">
    <location>
        <begin position="90"/>
        <end position="92"/>
    </location>
</feature>
<feature type="strand" evidence="10">
    <location>
        <begin position="93"/>
        <end position="95"/>
    </location>
</feature>
<feature type="strand" evidence="7">
    <location>
        <begin position="96"/>
        <end position="98"/>
    </location>
</feature>
<feature type="helix" evidence="7">
    <location>
        <begin position="105"/>
        <end position="111"/>
    </location>
</feature>
<feature type="turn" evidence="7">
    <location>
        <begin position="112"/>
        <end position="115"/>
    </location>
</feature>
<feature type="strand" evidence="7">
    <location>
        <begin position="127"/>
        <end position="137"/>
    </location>
</feature>
<feature type="strand" evidence="9">
    <location>
        <begin position="140"/>
        <end position="142"/>
    </location>
</feature>
<feature type="helix" evidence="7">
    <location>
        <begin position="143"/>
        <end position="156"/>
    </location>
</feature>
<feature type="helix" evidence="7">
    <location>
        <begin position="159"/>
        <end position="163"/>
    </location>
</feature>
<feature type="strand" evidence="7">
    <location>
        <begin position="164"/>
        <end position="173"/>
    </location>
</feature>
<feature type="helix" evidence="7">
    <location>
        <begin position="174"/>
        <end position="181"/>
    </location>
</feature>
<feature type="helix" evidence="7">
    <location>
        <begin position="191"/>
        <end position="199"/>
    </location>
</feature>
<feature type="strand" evidence="7">
    <location>
        <begin position="200"/>
        <end position="208"/>
    </location>
</feature>
<feature type="helix" evidence="7">
    <location>
        <begin position="210"/>
        <end position="215"/>
    </location>
</feature>
<feature type="helix" evidence="7">
    <location>
        <begin position="218"/>
        <end position="224"/>
    </location>
</feature>
<feature type="helix" evidence="7">
    <location>
        <begin position="231"/>
        <end position="233"/>
    </location>
</feature>
<feature type="strand" evidence="7">
    <location>
        <begin position="234"/>
        <end position="236"/>
    </location>
</feature>
<feature type="strand" evidence="7">
    <location>
        <begin position="242"/>
        <end position="249"/>
    </location>
</feature>
<feature type="helix" evidence="7">
    <location>
        <begin position="256"/>
        <end position="267"/>
    </location>
</feature>
<feature type="turn" evidence="7">
    <location>
        <begin position="268"/>
        <end position="271"/>
    </location>
</feature>
<feature type="turn" evidence="7">
    <location>
        <begin position="274"/>
        <end position="276"/>
    </location>
</feature>
<feature type="helix" evidence="7">
    <location>
        <begin position="277"/>
        <end position="280"/>
    </location>
</feature>
<feature type="strand" evidence="11">
    <location>
        <begin position="282"/>
        <end position="284"/>
    </location>
</feature>
<feature type="helix" evidence="7">
    <location>
        <begin position="285"/>
        <end position="289"/>
    </location>
</feature>
<feature type="turn" evidence="7">
    <location>
        <begin position="290"/>
        <end position="292"/>
    </location>
</feature>
<feature type="turn" evidence="7">
    <location>
        <begin position="297"/>
        <end position="299"/>
    </location>
</feature>
<feature type="helix" evidence="7">
    <location>
        <begin position="303"/>
        <end position="305"/>
    </location>
</feature>
<feature type="helix" evidence="7">
    <location>
        <begin position="308"/>
        <end position="319"/>
    </location>
</feature>
<feature type="strand" evidence="8">
    <location>
        <begin position="327"/>
        <end position="329"/>
    </location>
</feature>
<feature type="strand" evidence="9">
    <location>
        <begin position="334"/>
        <end position="336"/>
    </location>
</feature>
<accession>P14908</accession>
<accession>D6W053</accession>
<protein>
    <recommendedName>
        <fullName>Mitochondrial transcription factor 1</fullName>
        <ecNumber>2.1.1.-</ecNumber>
    </recommendedName>
    <alternativeName>
        <fullName>Mitochondrial transcription factor mtTFB</fullName>
    </alternativeName>
    <alternativeName>
        <fullName>Mitochondrial-specificity factor</fullName>
    </alternativeName>
    <alternativeName>
        <fullName>RF1023</fullName>
    </alternativeName>
</protein>
<organism>
    <name type="scientific">Saccharomyces cerevisiae (strain ATCC 204508 / S288c)</name>
    <name type="common">Baker's yeast</name>
    <dbReference type="NCBI Taxonomy" id="559292"/>
    <lineage>
        <taxon>Eukaryota</taxon>
        <taxon>Fungi</taxon>
        <taxon>Dikarya</taxon>
        <taxon>Ascomycota</taxon>
        <taxon>Saccharomycotina</taxon>
        <taxon>Saccharomycetes</taxon>
        <taxon>Saccharomycetales</taxon>
        <taxon>Saccharomycetaceae</taxon>
        <taxon>Saccharomyces</taxon>
    </lineage>
</organism>
<gene>
    <name type="primary">MTF1</name>
    <name type="ordered locus">YMR228W</name>
    <name type="ORF">YM9959.10</name>
</gene>
<name>MTF1_YEAST</name>
<evidence type="ECO:0000255" key="1">
    <source>
        <dbReference type="PROSITE-ProRule" id="PRU01026"/>
    </source>
</evidence>
<evidence type="ECO:0000269" key="2">
    <source>
    </source>
</evidence>
<evidence type="ECO:0000269" key="3">
    <source>
    </source>
</evidence>
<evidence type="ECO:0000269" key="4">
    <source>
    </source>
</evidence>
<evidence type="ECO:0000269" key="5">
    <source>
    </source>
</evidence>
<evidence type="ECO:0000305" key="6"/>
<evidence type="ECO:0007829" key="7">
    <source>
        <dbReference type="PDB" id="1I4W"/>
    </source>
</evidence>
<evidence type="ECO:0007829" key="8">
    <source>
        <dbReference type="PDB" id="6YMV"/>
    </source>
</evidence>
<evidence type="ECO:0007829" key="9">
    <source>
        <dbReference type="PDB" id="8AP1"/>
    </source>
</evidence>
<evidence type="ECO:0007829" key="10">
    <source>
        <dbReference type="PDB" id="8ATT"/>
    </source>
</evidence>
<evidence type="ECO:0007829" key="11">
    <source>
        <dbReference type="PDB" id="8ATV"/>
    </source>
</evidence>
<comment type="function">
    <text>Mitochondrial transcription factor that confers selective promoter recognition on the core subunit of the yeast mitochondrial RNA polymerase. Interacts with DNA in a non-specific manner.</text>
</comment>
<comment type="subcellular location">
    <subcellularLocation>
        <location evidence="3 5">Mitochondrion intermembrane space</location>
    </subcellularLocation>
</comment>
<comment type="miscellaneous">
    <text evidence="2">Present with 9380 molecules/cell in log phase SD medium.</text>
</comment>
<comment type="miscellaneous">
    <text>Although strongly related to dimethyladenosine transferase proteins, it lacks the methyltransferase activity. Dimethyladenosine transferase methylates the 2 adjacent adenosines in the loop of a conserved hairpin near the 3'-end of 12S mitochondrial rRNA in most species. This explains why 12S rRNA is not methylated in S.cerevisiae.</text>
</comment>
<comment type="similarity">
    <text evidence="1">Belongs to the class I-like SAM-binding methyltransferase superfamily. rRNA adenine N(6)-methyltransferase family.</text>
</comment>
<proteinExistence type="evidence at protein level"/>
<dbReference type="EC" id="2.1.1.-"/>
<dbReference type="EMBL" id="X13513">
    <property type="protein sequence ID" value="CAA31864.1"/>
    <property type="molecule type" value="Genomic_DNA"/>
</dbReference>
<dbReference type="EMBL" id="Z49939">
    <property type="protein sequence ID" value="CAA90199.1"/>
    <property type="molecule type" value="Genomic_DNA"/>
</dbReference>
<dbReference type="EMBL" id="BK006946">
    <property type="protein sequence ID" value="DAA10127.1"/>
    <property type="molecule type" value="Genomic_DNA"/>
</dbReference>
<dbReference type="PIR" id="S57595">
    <property type="entry name" value="S57595"/>
</dbReference>
<dbReference type="RefSeq" id="NP_013955.1">
    <property type="nucleotide sequence ID" value="NM_001182735.1"/>
</dbReference>
<dbReference type="PDB" id="1I4W">
    <property type="method" value="X-ray"/>
    <property type="resolution" value="2.60 A"/>
    <property type="chains" value="A=2-341"/>
</dbReference>
<dbReference type="PDB" id="6YMV">
    <property type="method" value="EM"/>
    <property type="resolution" value="3.10 A"/>
    <property type="chains" value="B=2-341"/>
</dbReference>
<dbReference type="PDB" id="6YMW">
    <property type="method" value="EM"/>
    <property type="resolution" value="3.71 A"/>
    <property type="chains" value="B=2-341"/>
</dbReference>
<dbReference type="PDB" id="8AP1">
    <property type="method" value="EM"/>
    <property type="resolution" value="3.47 A"/>
    <property type="chains" value="B=2-341"/>
</dbReference>
<dbReference type="PDB" id="8ATT">
    <property type="method" value="EM"/>
    <property type="resolution" value="3.44 A"/>
    <property type="chains" value="B=2-341"/>
</dbReference>
<dbReference type="PDB" id="8ATV">
    <property type="method" value="EM"/>
    <property type="resolution" value="3.39 A"/>
    <property type="chains" value="B=2-341"/>
</dbReference>
<dbReference type="PDB" id="8ATW">
    <property type="method" value="EM"/>
    <property type="resolution" value="3.62 A"/>
    <property type="chains" value="B=2-341"/>
</dbReference>
<dbReference type="PDB" id="8C5S">
    <property type="method" value="EM"/>
    <property type="resolution" value="3.75 A"/>
    <property type="chains" value="B=2-341"/>
</dbReference>
<dbReference type="PDB" id="8C5U">
    <property type="method" value="EM"/>
    <property type="resolution" value="3.62 A"/>
    <property type="chains" value="B=2-341"/>
</dbReference>
<dbReference type="PDB" id="8Q63">
    <property type="method" value="EM"/>
    <property type="resolution" value="3.68 A"/>
    <property type="chains" value="B=2-341"/>
</dbReference>
<dbReference type="PDBsum" id="1I4W"/>
<dbReference type="PDBsum" id="6YMV"/>
<dbReference type="PDBsum" id="6YMW"/>
<dbReference type="PDBsum" id="8AP1"/>
<dbReference type="PDBsum" id="8ATT"/>
<dbReference type="PDBsum" id="8ATV"/>
<dbReference type="PDBsum" id="8ATW"/>
<dbReference type="PDBsum" id="8C5S"/>
<dbReference type="PDBsum" id="8C5U"/>
<dbReference type="PDBsum" id="8Q63"/>
<dbReference type="EMDB" id="EMD-10845"/>
<dbReference type="EMDB" id="EMD-10846"/>
<dbReference type="EMDB" id="EMD-15556"/>
<dbReference type="EMDB" id="EMD-15662"/>
<dbReference type="EMDB" id="EMD-15664"/>
<dbReference type="EMDB" id="EMD-15665"/>
<dbReference type="EMDB" id="EMD-16442"/>
<dbReference type="EMDB" id="EMD-16443"/>
<dbReference type="EMDB" id="EMD-18183"/>
<dbReference type="SASBDB" id="P14908"/>
<dbReference type="SMR" id="P14908"/>
<dbReference type="BioGRID" id="35406">
    <property type="interactions" value="37"/>
</dbReference>
<dbReference type="ComplexPortal" id="CPX-3146">
    <property type="entry name" value="Mitochondrial DNA-directed RNA polymerase complex"/>
</dbReference>
<dbReference type="DIP" id="DIP-1542N"/>
<dbReference type="FunCoup" id="P14908">
    <property type="interactions" value="41"/>
</dbReference>
<dbReference type="IntAct" id="P14908">
    <property type="interactions" value="1"/>
</dbReference>
<dbReference type="MINT" id="P14908"/>
<dbReference type="STRING" id="4932.YMR228W"/>
<dbReference type="iPTMnet" id="P14908"/>
<dbReference type="PaxDb" id="4932-YMR228W"/>
<dbReference type="PeptideAtlas" id="P14908"/>
<dbReference type="EnsemblFungi" id="YMR228W_mRNA">
    <property type="protein sequence ID" value="YMR228W"/>
    <property type="gene ID" value="YMR228W"/>
</dbReference>
<dbReference type="GeneID" id="855268"/>
<dbReference type="KEGG" id="sce:YMR228W"/>
<dbReference type="AGR" id="SGD:S000004841"/>
<dbReference type="SGD" id="S000004841">
    <property type="gene designation" value="MTF1"/>
</dbReference>
<dbReference type="VEuPathDB" id="FungiDB:YMR228W"/>
<dbReference type="eggNOG" id="ENOG502QY7G">
    <property type="taxonomic scope" value="Eukaryota"/>
</dbReference>
<dbReference type="HOGENOM" id="CLU_034228_0_0_1"/>
<dbReference type="InParanoid" id="P14908"/>
<dbReference type="OMA" id="WDYVTKH"/>
<dbReference type="OrthoDB" id="16079at2759"/>
<dbReference type="BioCyc" id="YEAST:G3O-32909-MONOMER"/>
<dbReference type="Reactome" id="R-SCE-163282">
    <property type="pathway name" value="Mitochondrial transcription initiation"/>
</dbReference>
<dbReference type="BioGRID-ORCS" id="855268">
    <property type="hits" value="0 hits in 10 CRISPR screens"/>
</dbReference>
<dbReference type="EvolutionaryTrace" id="P14908"/>
<dbReference type="PRO" id="PR:P14908"/>
<dbReference type="Proteomes" id="UP000002311">
    <property type="component" value="Chromosome XIII"/>
</dbReference>
<dbReference type="RNAct" id="P14908">
    <property type="molecule type" value="protein"/>
</dbReference>
<dbReference type="GO" id="GO:0034245">
    <property type="term" value="C:mitochondrial DNA-directed RNA polymerase complex"/>
    <property type="evidence" value="ECO:0000314"/>
    <property type="project" value="SGD"/>
</dbReference>
<dbReference type="GO" id="GO:0005758">
    <property type="term" value="C:mitochondrial intermembrane space"/>
    <property type="evidence" value="ECO:0000314"/>
    <property type="project" value="SGD"/>
</dbReference>
<dbReference type="GO" id="GO:0005759">
    <property type="term" value="C:mitochondrial matrix"/>
    <property type="evidence" value="ECO:0000314"/>
    <property type="project" value="SGD"/>
</dbReference>
<dbReference type="GO" id="GO:0005739">
    <property type="term" value="C:mitochondrion"/>
    <property type="evidence" value="ECO:0007005"/>
    <property type="project" value="SGD"/>
</dbReference>
<dbReference type="GO" id="GO:0003677">
    <property type="term" value="F:DNA binding"/>
    <property type="evidence" value="ECO:0007669"/>
    <property type="project" value="UniProtKB-KW"/>
</dbReference>
<dbReference type="GO" id="GO:0008168">
    <property type="term" value="F:methyltransferase activity"/>
    <property type="evidence" value="ECO:0007669"/>
    <property type="project" value="UniProtKB-KW"/>
</dbReference>
<dbReference type="GO" id="GO:0034246">
    <property type="term" value="F:mitochondrial transcription factor activity"/>
    <property type="evidence" value="ECO:0000314"/>
    <property type="project" value="SGD"/>
</dbReference>
<dbReference type="GO" id="GO:0003723">
    <property type="term" value="F:RNA binding"/>
    <property type="evidence" value="ECO:0007669"/>
    <property type="project" value="UniProtKB-KW"/>
</dbReference>
<dbReference type="GO" id="GO:0032259">
    <property type="term" value="P:methylation"/>
    <property type="evidence" value="ECO:0007669"/>
    <property type="project" value="UniProtKB-KW"/>
</dbReference>
<dbReference type="GO" id="GO:0006390">
    <property type="term" value="P:mitochondrial transcription"/>
    <property type="evidence" value="ECO:0000314"/>
    <property type="project" value="ComplexPortal"/>
</dbReference>
<dbReference type="GO" id="GO:0032786">
    <property type="term" value="P:positive regulation of DNA-templated transcription, elongation"/>
    <property type="evidence" value="ECO:0000315"/>
    <property type="project" value="SGD"/>
</dbReference>
<dbReference type="GO" id="GO:0006391">
    <property type="term" value="P:transcription initiation at mitochondrial promoter"/>
    <property type="evidence" value="ECO:0000314"/>
    <property type="project" value="SGD"/>
</dbReference>
<dbReference type="FunFam" id="1.10.8.100:FF:000007">
    <property type="entry name" value="Mitochondrial transcription factor"/>
    <property type="match status" value="1"/>
</dbReference>
<dbReference type="FunFam" id="3.40.50.150:FF:000424">
    <property type="entry name" value="Mitochondrial transcription factor"/>
    <property type="match status" value="1"/>
</dbReference>
<dbReference type="Gene3D" id="1.10.8.100">
    <property type="entry name" value="Ribosomal RNA adenine dimethylase-like, domain 2"/>
    <property type="match status" value="1"/>
</dbReference>
<dbReference type="Gene3D" id="3.40.50.150">
    <property type="entry name" value="Vaccinia Virus protein VP39"/>
    <property type="match status" value="1"/>
</dbReference>
<dbReference type="InterPro" id="IPR001737">
    <property type="entry name" value="KsgA/Erm"/>
</dbReference>
<dbReference type="InterPro" id="IPR016586">
    <property type="entry name" value="Mtf1"/>
</dbReference>
<dbReference type="InterPro" id="IPR023165">
    <property type="entry name" value="rRNA_Ade_diMease-like_C"/>
</dbReference>
<dbReference type="InterPro" id="IPR029063">
    <property type="entry name" value="SAM-dependent_MTases_sf"/>
</dbReference>
<dbReference type="PANTHER" id="PTHR11727">
    <property type="entry name" value="DIMETHYLADENOSINE TRANSFERASE"/>
    <property type="match status" value="1"/>
</dbReference>
<dbReference type="PANTHER" id="PTHR11727:SF17">
    <property type="entry name" value="DIMETHYLADENOSINE TRANSFERASE 1, MITOCHONDRIAL"/>
    <property type="match status" value="1"/>
</dbReference>
<dbReference type="Pfam" id="PF00398">
    <property type="entry name" value="RrnaAD"/>
    <property type="match status" value="1"/>
</dbReference>
<dbReference type="PIRSF" id="PIRSF011649">
    <property type="entry name" value="MtTFB"/>
    <property type="match status" value="1"/>
</dbReference>
<dbReference type="SUPFAM" id="SSF53335">
    <property type="entry name" value="S-adenosyl-L-methionine-dependent methyltransferases"/>
    <property type="match status" value="1"/>
</dbReference>
<dbReference type="PROSITE" id="PS51689">
    <property type="entry name" value="SAM_RNA_A_N6_MT"/>
    <property type="match status" value="1"/>
</dbReference>
<sequence length="341" mass="39727">MSVPIPGIKDISKLKFFYGFKYLWNPTVYNKIFDKLDLTKTYKHPEELKVLDLYPGVGIQSAIFYNKYCPRQYSLLEKRSSLYKFLNAKFEGSPLQILKRDPYDWSTYSNLIDEERIFVPEVQSSDHINDKFLTVANVTGEGSEGLIMQWLSCIGNKNWLYRFGKVKMLLWMPSTTARKLLARPGMHSRSKCSVVREAFTDTKLIAISDANELKGFDSQCIEEWDPILFSAAEIWPTKGKPIALVEMDPIDFDFDVDNWDYVTRHLMILKRTPLNTVMDSLGHGGQQYFNSRITDKDLLKKCPIDLTNDEFIYLTKLFMEWPFKPDILMDFVDMYQTEHSG</sequence>
<reference key="1">
    <citation type="journal article" date="1988" name="Mol. Gen. Genet.">
        <title>A nuclear gene essential for mitochondrial replication suppresses a defect of mitochondrial transcription in Saccharomyces cerevisiae.</title>
        <authorList>
            <person name="Lisowsky T."/>
            <person name="Michaelis G."/>
        </authorList>
    </citation>
    <scope>NUCLEOTIDE SEQUENCE [GENOMIC DNA]</scope>
</reference>
<reference key="2">
    <citation type="journal article" date="1997" name="Nature">
        <title>The nucleotide sequence of Saccharomyces cerevisiae chromosome XIII.</title>
        <authorList>
            <person name="Bowman S."/>
            <person name="Churcher C.M."/>
            <person name="Badcock K."/>
            <person name="Brown D."/>
            <person name="Chillingworth T."/>
            <person name="Connor R."/>
            <person name="Dedman K."/>
            <person name="Devlin K."/>
            <person name="Gentles S."/>
            <person name="Hamlin N."/>
            <person name="Hunt S."/>
            <person name="Jagels K."/>
            <person name="Lye G."/>
            <person name="Moule S."/>
            <person name="Odell C."/>
            <person name="Pearson D."/>
            <person name="Rajandream M.A."/>
            <person name="Rice P."/>
            <person name="Skelton J."/>
            <person name="Walsh S.V."/>
            <person name="Whitehead S."/>
            <person name="Barrell B.G."/>
        </authorList>
    </citation>
    <scope>NUCLEOTIDE SEQUENCE [LARGE SCALE GENOMIC DNA]</scope>
    <source>
        <strain>ATCC 204508 / S288c</strain>
    </source>
</reference>
<reference key="3">
    <citation type="journal article" date="2014" name="G3 (Bethesda)">
        <title>The reference genome sequence of Saccharomyces cerevisiae: Then and now.</title>
        <authorList>
            <person name="Engel S.R."/>
            <person name="Dietrich F.S."/>
            <person name="Fisk D.G."/>
            <person name="Binkley G."/>
            <person name="Balakrishnan R."/>
            <person name="Costanzo M.C."/>
            <person name="Dwight S.S."/>
            <person name="Hitz B.C."/>
            <person name="Karra K."/>
            <person name="Nash R.S."/>
            <person name="Weng S."/>
            <person name="Wong E.D."/>
            <person name="Lloyd P."/>
            <person name="Skrzypek M.S."/>
            <person name="Miyasato S.R."/>
            <person name="Simison M."/>
            <person name="Cherry J.M."/>
        </authorList>
    </citation>
    <scope>GENOME REANNOTATION</scope>
    <source>
        <strain>ATCC 204508 / S288c</strain>
    </source>
</reference>
<reference key="4">
    <citation type="journal article" date="1991" name="J. Biol. Chem.">
        <title>The yeast mitochondrial RNA polymerase specificity factor, MTF1, is similar to bacterial sigma factors.</title>
        <authorList>
            <person name="Jang S.H."/>
            <person name="Jaehning J.A."/>
        </authorList>
    </citation>
    <scope>PROTEIN SEQUENCE OF 2-21</scope>
    <scope>CHARACTERIZATION</scope>
</reference>
<reference key="5">
    <citation type="journal article" date="1992" name="Nucleic Acids Res.">
        <title>Assignment of a yeast protein necessary for mitochondrial transcription initiation.</title>
        <authorList>
            <person name="Xu B."/>
            <person name="Clayton D.A."/>
        </authorList>
    </citation>
    <scope>CHARACTERIZATION</scope>
</reference>
<reference key="6">
    <citation type="journal article" date="1993" name="Mol. Gen. Genet.">
        <title>A point mutation in the core subunit gene of yeast mitochondrial RNA polymerase is suppressed by a high level of specificity factor MTF1.</title>
        <authorList>
            <person name="Riemen G."/>
            <person name="Michaelis G."/>
        </authorList>
    </citation>
    <scope>CHARACTERIZATION</scope>
</reference>
<reference key="7">
    <citation type="journal article" date="2003" name="Nature">
        <title>Global analysis of protein expression in yeast.</title>
        <authorList>
            <person name="Ghaemmaghami S."/>
            <person name="Huh W.-K."/>
            <person name="Bower K."/>
            <person name="Howson R.W."/>
            <person name="Belle A."/>
            <person name="Dephoure N."/>
            <person name="O'Shea E.K."/>
            <person name="Weissman J.S."/>
        </authorList>
    </citation>
    <scope>LEVEL OF PROTEIN EXPRESSION [LARGE SCALE ANALYSIS]</scope>
</reference>
<reference key="8">
    <citation type="journal article" date="2006" name="J. Proteome Res.">
        <title>Toward the complete yeast mitochondrial proteome: multidimensional separation techniques for mitochondrial proteomics.</title>
        <authorList>
            <person name="Reinders J."/>
            <person name="Zahedi R.P."/>
            <person name="Pfanner N."/>
            <person name="Meisinger C."/>
            <person name="Sickmann A."/>
        </authorList>
    </citation>
    <scope>SUBCELLULAR LOCATION [LARGE SCALE ANALYSIS]</scope>
    <scope>IDENTIFICATION BY MASS SPECTROMETRY</scope>
</reference>
<reference key="9">
    <citation type="journal article" date="2012" name="Mol. Cell. Proteomics">
        <title>Intermembrane space proteome of yeast mitochondria.</title>
        <authorList>
            <person name="Voegtle F.N."/>
            <person name="Burkhart J.M."/>
            <person name="Rao S."/>
            <person name="Gerbeth C."/>
            <person name="Hinrichs J."/>
            <person name="Martinou J.C."/>
            <person name="Chacinska A."/>
            <person name="Sickmann A."/>
            <person name="Zahedi R.P."/>
            <person name="Meisinger C."/>
        </authorList>
    </citation>
    <scope>IDENTIFICATION BY MASS SPECTROMETRY</scope>
    <scope>SUBCELLULAR LOCATION [LARGE SCALE ANALYSIS]</scope>
</reference>
<reference key="10">
    <citation type="journal article" date="2001" name="Protein Sci.">
        <title>Crystal structure of the transcription factor sc-mtTFB offers insights into mitochondrial transcription.</title>
        <authorList>
            <person name="Schubot F.D."/>
            <person name="Chen C.J."/>
            <person name="Rose J.P."/>
            <person name="Dailey T.A."/>
            <person name="Dailey H.A."/>
            <person name="Wang B.-C."/>
        </authorList>
    </citation>
    <scope>X-RAY CRYSTALLOGRAPHY (2.6 ANGSTROMS)</scope>
</reference>